<protein>
    <recommendedName>
        <fullName evidence="1">Phospho-N-acetylmuramoyl-pentapeptide-transferase</fullName>
        <ecNumber evidence="1">2.7.8.13</ecNumber>
    </recommendedName>
    <alternativeName>
        <fullName evidence="1">UDP-MurNAc-pentapeptide phosphotransferase</fullName>
    </alternativeName>
</protein>
<feature type="chain" id="PRO_1000074533" description="Phospho-N-acetylmuramoyl-pentapeptide-transferase">
    <location>
        <begin position="1"/>
        <end position="356"/>
    </location>
</feature>
<feature type="transmembrane region" description="Helical" evidence="1">
    <location>
        <begin position="25"/>
        <end position="45"/>
    </location>
</feature>
<feature type="transmembrane region" description="Helical" evidence="1">
    <location>
        <begin position="70"/>
        <end position="90"/>
    </location>
</feature>
<feature type="transmembrane region" description="Helical" evidence="1">
    <location>
        <begin position="93"/>
        <end position="113"/>
    </location>
</feature>
<feature type="transmembrane region" description="Helical" evidence="1">
    <location>
        <begin position="138"/>
        <end position="158"/>
    </location>
</feature>
<feature type="transmembrane region" description="Helical" evidence="1">
    <location>
        <begin position="164"/>
        <end position="184"/>
    </location>
</feature>
<feature type="transmembrane region" description="Helical" evidence="1">
    <location>
        <begin position="195"/>
        <end position="215"/>
    </location>
</feature>
<feature type="transmembrane region" description="Helical" evidence="1">
    <location>
        <begin position="235"/>
        <end position="255"/>
    </location>
</feature>
<feature type="transmembrane region" description="Helical" evidence="1">
    <location>
        <begin position="258"/>
        <end position="278"/>
    </location>
</feature>
<feature type="transmembrane region" description="Helical" evidence="1">
    <location>
        <begin position="284"/>
        <end position="304"/>
    </location>
</feature>
<feature type="transmembrane region" description="Helical" evidence="1">
    <location>
        <begin position="333"/>
        <end position="353"/>
    </location>
</feature>
<reference key="1">
    <citation type="journal article" date="2007" name="Nat. Genet.">
        <title>Genomic analysis of Bartonella identifies type IV secretion systems as host adaptability factors.</title>
        <authorList>
            <person name="Saenz H.L."/>
            <person name="Engel P."/>
            <person name="Stoeckli M.C."/>
            <person name="Lanz C."/>
            <person name="Raddatz G."/>
            <person name="Vayssier-Taussat M."/>
            <person name="Birtles R."/>
            <person name="Schuster S.C."/>
            <person name="Dehio C."/>
        </authorList>
    </citation>
    <scope>NUCLEOTIDE SEQUENCE [LARGE SCALE GENOMIC DNA]</scope>
    <source>
        <strain>CIP 105476 / IBS 506</strain>
    </source>
</reference>
<name>MRAY_BART1</name>
<accession>A9IWA8</accession>
<keyword id="KW-0131">Cell cycle</keyword>
<keyword id="KW-0132">Cell division</keyword>
<keyword id="KW-0997">Cell inner membrane</keyword>
<keyword id="KW-1003">Cell membrane</keyword>
<keyword id="KW-0133">Cell shape</keyword>
<keyword id="KW-0961">Cell wall biogenesis/degradation</keyword>
<keyword id="KW-0460">Magnesium</keyword>
<keyword id="KW-0472">Membrane</keyword>
<keyword id="KW-0479">Metal-binding</keyword>
<keyword id="KW-0573">Peptidoglycan synthesis</keyword>
<keyword id="KW-0808">Transferase</keyword>
<keyword id="KW-0812">Transmembrane</keyword>
<keyword id="KW-1133">Transmembrane helix</keyword>
<gene>
    <name evidence="1" type="primary">mraY</name>
    <name type="ordered locus">BT_1594</name>
</gene>
<organism>
    <name type="scientific">Bartonella tribocorum (strain CIP 105476 / IBS 506)</name>
    <dbReference type="NCBI Taxonomy" id="382640"/>
    <lineage>
        <taxon>Bacteria</taxon>
        <taxon>Pseudomonadati</taxon>
        <taxon>Pseudomonadota</taxon>
        <taxon>Alphaproteobacteria</taxon>
        <taxon>Hyphomicrobiales</taxon>
        <taxon>Bartonellaceae</taxon>
        <taxon>Bartonella</taxon>
    </lineage>
</organism>
<sequence>MMLFFSSFSDWFPGVNVFRYITFRTIAAMLTSGLIVFLFGPSIIASLKLRQGKGQPIRADGPQTHFKKAGTPTMGGLMILTGIVVSAFLWCNLSNIYFWVSLLVMLSFGAIGFYDDYLKVTKQTDKGFSGKARLSLEFFVAAIAAFIILQIGSSGFALPFLKDYLIHLGWFFIPFSAFVIVATGNAVNLTDGLDGLAIVPVMVAALSFALIAYLCGNMNFADYLQIHYVSGTGELAVLLGAVVGAGLGFLWFNAPPAAIFMGDTGSLALGGLLGTVAVATKHEIVLVLIGGLFVVEAFSVVIQVGYFKLTRKRVFLMAPIHHHFEKKGWTESQVVIRFWIISIVLALIGLSTLKLR</sequence>
<dbReference type="EC" id="2.7.8.13" evidence="1"/>
<dbReference type="EMBL" id="AM260525">
    <property type="protein sequence ID" value="CAK01933.1"/>
    <property type="molecule type" value="Genomic_DNA"/>
</dbReference>
<dbReference type="RefSeq" id="WP_012232059.1">
    <property type="nucleotide sequence ID" value="NC_010161.1"/>
</dbReference>
<dbReference type="SMR" id="A9IWA8"/>
<dbReference type="KEGG" id="btr:BT_1594"/>
<dbReference type="eggNOG" id="COG0472">
    <property type="taxonomic scope" value="Bacteria"/>
</dbReference>
<dbReference type="HOGENOM" id="CLU_023982_0_0_5"/>
<dbReference type="UniPathway" id="UPA00219"/>
<dbReference type="Proteomes" id="UP000001592">
    <property type="component" value="Chromosome"/>
</dbReference>
<dbReference type="GO" id="GO:0005886">
    <property type="term" value="C:plasma membrane"/>
    <property type="evidence" value="ECO:0007669"/>
    <property type="project" value="UniProtKB-SubCell"/>
</dbReference>
<dbReference type="GO" id="GO:0046872">
    <property type="term" value="F:metal ion binding"/>
    <property type="evidence" value="ECO:0007669"/>
    <property type="project" value="UniProtKB-KW"/>
</dbReference>
<dbReference type="GO" id="GO:0008963">
    <property type="term" value="F:phospho-N-acetylmuramoyl-pentapeptide-transferase activity"/>
    <property type="evidence" value="ECO:0007669"/>
    <property type="project" value="UniProtKB-UniRule"/>
</dbReference>
<dbReference type="GO" id="GO:0051992">
    <property type="term" value="F:UDP-N-acetylmuramoyl-L-alanyl-D-glutamyl-meso-2,6-diaminopimelyl-D-alanyl-D-alanine:undecaprenyl-phosphate transferase activity"/>
    <property type="evidence" value="ECO:0007669"/>
    <property type="project" value="RHEA"/>
</dbReference>
<dbReference type="GO" id="GO:0051301">
    <property type="term" value="P:cell division"/>
    <property type="evidence" value="ECO:0007669"/>
    <property type="project" value="UniProtKB-KW"/>
</dbReference>
<dbReference type="GO" id="GO:0071555">
    <property type="term" value="P:cell wall organization"/>
    <property type="evidence" value="ECO:0007669"/>
    <property type="project" value="UniProtKB-KW"/>
</dbReference>
<dbReference type="GO" id="GO:0009252">
    <property type="term" value="P:peptidoglycan biosynthetic process"/>
    <property type="evidence" value="ECO:0007669"/>
    <property type="project" value="UniProtKB-UniRule"/>
</dbReference>
<dbReference type="GO" id="GO:0008360">
    <property type="term" value="P:regulation of cell shape"/>
    <property type="evidence" value="ECO:0007669"/>
    <property type="project" value="UniProtKB-KW"/>
</dbReference>
<dbReference type="CDD" id="cd06852">
    <property type="entry name" value="GT_MraY"/>
    <property type="match status" value="1"/>
</dbReference>
<dbReference type="HAMAP" id="MF_00038">
    <property type="entry name" value="MraY"/>
    <property type="match status" value="1"/>
</dbReference>
<dbReference type="InterPro" id="IPR000715">
    <property type="entry name" value="Glycosyl_transferase_4"/>
</dbReference>
<dbReference type="InterPro" id="IPR003524">
    <property type="entry name" value="PNAcMuramoyl-5peptid_Trfase"/>
</dbReference>
<dbReference type="InterPro" id="IPR018480">
    <property type="entry name" value="PNAcMuramoyl-5peptid_Trfase_CS"/>
</dbReference>
<dbReference type="NCBIfam" id="TIGR00445">
    <property type="entry name" value="mraY"/>
    <property type="match status" value="1"/>
</dbReference>
<dbReference type="PANTHER" id="PTHR22926">
    <property type="entry name" value="PHOSPHO-N-ACETYLMURAMOYL-PENTAPEPTIDE-TRANSFERASE"/>
    <property type="match status" value="1"/>
</dbReference>
<dbReference type="PANTHER" id="PTHR22926:SF5">
    <property type="entry name" value="PHOSPHO-N-ACETYLMURAMOYL-PENTAPEPTIDE-TRANSFERASE HOMOLOG"/>
    <property type="match status" value="1"/>
</dbReference>
<dbReference type="Pfam" id="PF00953">
    <property type="entry name" value="Glycos_transf_4"/>
    <property type="match status" value="1"/>
</dbReference>
<dbReference type="Pfam" id="PF10555">
    <property type="entry name" value="MraY_sig1"/>
    <property type="match status" value="1"/>
</dbReference>
<dbReference type="PROSITE" id="PS01347">
    <property type="entry name" value="MRAY_1"/>
    <property type="match status" value="1"/>
</dbReference>
<dbReference type="PROSITE" id="PS01348">
    <property type="entry name" value="MRAY_2"/>
    <property type="match status" value="1"/>
</dbReference>
<proteinExistence type="inferred from homology"/>
<evidence type="ECO:0000255" key="1">
    <source>
        <dbReference type="HAMAP-Rule" id="MF_00038"/>
    </source>
</evidence>
<comment type="function">
    <text evidence="1">Catalyzes the initial step of the lipid cycle reactions in the biosynthesis of the cell wall peptidoglycan: transfers peptidoglycan precursor phospho-MurNAc-pentapeptide from UDP-MurNAc-pentapeptide onto the lipid carrier undecaprenyl phosphate, yielding undecaprenyl-pyrophosphoryl-MurNAc-pentapeptide, known as lipid I.</text>
</comment>
<comment type="catalytic activity">
    <reaction evidence="1">
        <text>UDP-N-acetyl-alpha-D-muramoyl-L-alanyl-gamma-D-glutamyl-meso-2,6-diaminopimeloyl-D-alanyl-D-alanine + di-trans,octa-cis-undecaprenyl phosphate = di-trans,octa-cis-undecaprenyl diphospho-N-acetyl-alpha-D-muramoyl-L-alanyl-D-glutamyl-meso-2,6-diaminopimeloyl-D-alanyl-D-alanine + UMP</text>
        <dbReference type="Rhea" id="RHEA:28386"/>
        <dbReference type="ChEBI" id="CHEBI:57865"/>
        <dbReference type="ChEBI" id="CHEBI:60392"/>
        <dbReference type="ChEBI" id="CHEBI:61386"/>
        <dbReference type="ChEBI" id="CHEBI:61387"/>
        <dbReference type="EC" id="2.7.8.13"/>
    </reaction>
</comment>
<comment type="cofactor">
    <cofactor evidence="1">
        <name>Mg(2+)</name>
        <dbReference type="ChEBI" id="CHEBI:18420"/>
    </cofactor>
</comment>
<comment type="pathway">
    <text evidence="1">Cell wall biogenesis; peptidoglycan biosynthesis.</text>
</comment>
<comment type="subcellular location">
    <subcellularLocation>
        <location evidence="1">Cell inner membrane</location>
        <topology evidence="1">Multi-pass membrane protein</topology>
    </subcellularLocation>
</comment>
<comment type="similarity">
    <text evidence="1">Belongs to the glycosyltransferase 4 family. MraY subfamily.</text>
</comment>